<proteinExistence type="inferred from homology"/>
<keyword id="KW-0963">Cytoplasm</keyword>
<keyword id="KW-0690">Ribosome biogenesis</keyword>
<gene>
    <name evidence="1" type="primary">rbfA</name>
    <name type="ordered locus">LIC_12704</name>
</gene>
<reference key="1">
    <citation type="journal article" date="2004" name="J. Bacteriol.">
        <title>Comparative genomics of two Leptospira interrogans serovars reveals novel insights into physiology and pathogenesis.</title>
        <authorList>
            <person name="Nascimento A.L.T.O."/>
            <person name="Ko A.I."/>
            <person name="Martins E.A.L."/>
            <person name="Monteiro-Vitorello C.B."/>
            <person name="Ho P.L."/>
            <person name="Haake D.A."/>
            <person name="Verjovski-Almeida S."/>
            <person name="Hartskeerl R.A."/>
            <person name="Marques M.V."/>
            <person name="Oliveira M.C."/>
            <person name="Menck C.F.M."/>
            <person name="Leite L.C.C."/>
            <person name="Carrer H."/>
            <person name="Coutinho L.L."/>
            <person name="Degrave W.M."/>
            <person name="Dellagostin O.A."/>
            <person name="El-Dorry H."/>
            <person name="Ferro E.S."/>
            <person name="Ferro M.I.T."/>
            <person name="Furlan L.R."/>
            <person name="Gamberini M."/>
            <person name="Giglioti E.A."/>
            <person name="Goes-Neto A."/>
            <person name="Goldman G.H."/>
            <person name="Goldman M.H.S."/>
            <person name="Harakava R."/>
            <person name="Jeronimo S.M.B."/>
            <person name="Junqueira-de-Azevedo I.L.M."/>
            <person name="Kimura E.T."/>
            <person name="Kuramae E.E."/>
            <person name="Lemos E.G.M."/>
            <person name="Lemos M.V.F."/>
            <person name="Marino C.L."/>
            <person name="Nunes L.R."/>
            <person name="de Oliveira R.C."/>
            <person name="Pereira G.G."/>
            <person name="Reis M.S."/>
            <person name="Schriefer A."/>
            <person name="Siqueira W.J."/>
            <person name="Sommer P."/>
            <person name="Tsai S.M."/>
            <person name="Simpson A.J.G."/>
            <person name="Ferro J.A."/>
            <person name="Camargo L.E.A."/>
            <person name="Kitajima J.P."/>
            <person name="Setubal J.C."/>
            <person name="Van Sluys M.A."/>
        </authorList>
    </citation>
    <scope>NUCLEOTIDE SEQUENCE [LARGE SCALE GENOMIC DNA]</scope>
    <source>
        <strain>Fiocruz L1-130</strain>
    </source>
</reference>
<organism>
    <name type="scientific">Leptospira interrogans serogroup Icterohaemorrhagiae serovar copenhageni (strain Fiocruz L1-130)</name>
    <dbReference type="NCBI Taxonomy" id="267671"/>
    <lineage>
        <taxon>Bacteria</taxon>
        <taxon>Pseudomonadati</taxon>
        <taxon>Spirochaetota</taxon>
        <taxon>Spirochaetia</taxon>
        <taxon>Leptospirales</taxon>
        <taxon>Leptospiraceae</taxon>
        <taxon>Leptospira</taxon>
    </lineage>
</organism>
<accession>Q72NX4</accession>
<dbReference type="EMBL" id="AE016823">
    <property type="protein sequence ID" value="AAS71262.1"/>
    <property type="molecule type" value="Genomic_DNA"/>
</dbReference>
<dbReference type="RefSeq" id="WP_001068306.1">
    <property type="nucleotide sequence ID" value="NC_005823.1"/>
</dbReference>
<dbReference type="SMR" id="Q72NX4"/>
<dbReference type="GeneID" id="61142584"/>
<dbReference type="KEGG" id="lic:LIC_12704"/>
<dbReference type="HOGENOM" id="CLU_089475_5_1_12"/>
<dbReference type="Proteomes" id="UP000007037">
    <property type="component" value="Chromosome I"/>
</dbReference>
<dbReference type="GO" id="GO:0005829">
    <property type="term" value="C:cytosol"/>
    <property type="evidence" value="ECO:0007669"/>
    <property type="project" value="TreeGrafter"/>
</dbReference>
<dbReference type="GO" id="GO:0043024">
    <property type="term" value="F:ribosomal small subunit binding"/>
    <property type="evidence" value="ECO:0007669"/>
    <property type="project" value="TreeGrafter"/>
</dbReference>
<dbReference type="GO" id="GO:0030490">
    <property type="term" value="P:maturation of SSU-rRNA"/>
    <property type="evidence" value="ECO:0007669"/>
    <property type="project" value="UniProtKB-UniRule"/>
</dbReference>
<dbReference type="Gene3D" id="3.30.300.20">
    <property type="match status" value="1"/>
</dbReference>
<dbReference type="HAMAP" id="MF_00003">
    <property type="entry name" value="RbfA"/>
    <property type="match status" value="1"/>
</dbReference>
<dbReference type="InterPro" id="IPR015946">
    <property type="entry name" value="KH_dom-like_a/b"/>
</dbReference>
<dbReference type="InterPro" id="IPR000238">
    <property type="entry name" value="RbfA"/>
</dbReference>
<dbReference type="InterPro" id="IPR023799">
    <property type="entry name" value="RbfA_dom_sf"/>
</dbReference>
<dbReference type="InterPro" id="IPR020053">
    <property type="entry name" value="Ribosome-bd_factorA_CS"/>
</dbReference>
<dbReference type="NCBIfam" id="TIGR00082">
    <property type="entry name" value="rbfA"/>
    <property type="match status" value="1"/>
</dbReference>
<dbReference type="PANTHER" id="PTHR33515">
    <property type="entry name" value="RIBOSOME-BINDING FACTOR A, CHLOROPLASTIC-RELATED"/>
    <property type="match status" value="1"/>
</dbReference>
<dbReference type="PANTHER" id="PTHR33515:SF1">
    <property type="entry name" value="RIBOSOME-BINDING FACTOR A, CHLOROPLASTIC-RELATED"/>
    <property type="match status" value="1"/>
</dbReference>
<dbReference type="Pfam" id="PF02033">
    <property type="entry name" value="RBFA"/>
    <property type="match status" value="1"/>
</dbReference>
<dbReference type="SUPFAM" id="SSF89919">
    <property type="entry name" value="Ribosome-binding factor A, RbfA"/>
    <property type="match status" value="1"/>
</dbReference>
<dbReference type="PROSITE" id="PS01319">
    <property type="entry name" value="RBFA"/>
    <property type="match status" value="1"/>
</dbReference>
<sequence>MNPIRRRKIEAEAVRTVAMMILSGKVKDPRVHMVSVHRAEISEDGKNMKVFVTAICTDKKKIKVLSGLNSASGLFQATLSGKLGLRITPKMHFLWDEEYIQSLDESLRLTRKPTNTD</sequence>
<protein>
    <recommendedName>
        <fullName evidence="1">Ribosome-binding factor A</fullName>
    </recommendedName>
</protein>
<name>RBFA_LEPIC</name>
<comment type="function">
    <text evidence="1">One of several proteins that assist in the late maturation steps of the functional core of the 30S ribosomal subunit. Associates with free 30S ribosomal subunits (but not with 30S subunits that are part of 70S ribosomes or polysomes). Required for efficient processing of 16S rRNA. May interact with the 5'-terminal helix region of 16S rRNA.</text>
</comment>
<comment type="subunit">
    <text evidence="1">Monomer. Binds 30S ribosomal subunits, but not 50S ribosomal subunits or 70S ribosomes.</text>
</comment>
<comment type="subcellular location">
    <subcellularLocation>
        <location evidence="1">Cytoplasm</location>
    </subcellularLocation>
</comment>
<comment type="similarity">
    <text evidence="1">Belongs to the RbfA family.</text>
</comment>
<evidence type="ECO:0000255" key="1">
    <source>
        <dbReference type="HAMAP-Rule" id="MF_00003"/>
    </source>
</evidence>
<feature type="chain" id="PRO_0000102684" description="Ribosome-binding factor A">
    <location>
        <begin position="1"/>
        <end position="117"/>
    </location>
</feature>